<evidence type="ECO:0000250" key="1">
    <source>
        <dbReference type="UniProtKB" id="P04859"/>
    </source>
</evidence>
<evidence type="ECO:0000250" key="2">
    <source>
        <dbReference type="UniProtKB" id="P06162"/>
    </source>
</evidence>
<evidence type="ECO:0000250" key="3">
    <source>
        <dbReference type="UniProtKB" id="Q77M42"/>
    </source>
</evidence>
<evidence type="ECO:0000255" key="4"/>
<evidence type="ECO:0000256" key="5">
    <source>
        <dbReference type="SAM" id="MobiDB-lite"/>
    </source>
</evidence>
<evidence type="ECO:0000305" key="6"/>
<dbReference type="EMBL" id="M37792">
    <property type="protein sequence ID" value="AAA46868.1"/>
    <property type="molecule type" value="mRNA"/>
</dbReference>
<dbReference type="PIR" id="A39929">
    <property type="entry name" value="RRNZ39"/>
</dbReference>
<dbReference type="SMR" id="P28054"/>
<dbReference type="GO" id="GO:0003723">
    <property type="term" value="F:RNA binding"/>
    <property type="evidence" value="ECO:0007669"/>
    <property type="project" value="InterPro"/>
</dbReference>
<dbReference type="GO" id="GO:0003968">
    <property type="term" value="F:RNA-directed RNA polymerase activity"/>
    <property type="evidence" value="ECO:0007669"/>
    <property type="project" value="InterPro"/>
</dbReference>
<dbReference type="GO" id="GO:0006351">
    <property type="term" value="P:DNA-templated transcription"/>
    <property type="evidence" value="ECO:0007669"/>
    <property type="project" value="InterPro"/>
</dbReference>
<dbReference type="GO" id="GO:0019079">
    <property type="term" value="P:viral genome replication"/>
    <property type="evidence" value="ECO:0007669"/>
    <property type="project" value="InterPro"/>
</dbReference>
<dbReference type="CDD" id="cd21031">
    <property type="entry name" value="MEV_P-protein-C_like"/>
    <property type="match status" value="1"/>
</dbReference>
<dbReference type="Gene3D" id="1.10.287.340">
    <property type="match status" value="1"/>
</dbReference>
<dbReference type="Gene3D" id="1.10.8.10">
    <property type="entry name" value="DNA helicase RuvA subunit, C-terminal domain"/>
    <property type="match status" value="1"/>
</dbReference>
<dbReference type="Gene3D" id="1.10.287.320">
    <property type="entry name" value="Viral phosphoprotein oligmorisation site domain"/>
    <property type="match status" value="1"/>
</dbReference>
<dbReference type="InterPro" id="IPR002693">
    <property type="entry name" value="Paramyxo_PProtein_C"/>
</dbReference>
<dbReference type="InterPro" id="IPR043097">
    <property type="entry name" value="PProtein_oligomer_dom1"/>
</dbReference>
<dbReference type="InterPro" id="IPR016075">
    <property type="entry name" value="RNA_pol_Pprot-P_XD_paramyxovir"/>
</dbReference>
<dbReference type="Pfam" id="PF01806">
    <property type="entry name" value="Paramyxo_P"/>
    <property type="match status" value="1"/>
</dbReference>
<dbReference type="SUPFAM" id="SSF58034">
    <property type="entry name" value="Multimerization domain of the phosphoprotein from sendai virus"/>
    <property type="match status" value="1"/>
</dbReference>
<dbReference type="SUPFAM" id="SSF101089">
    <property type="entry name" value="Phosphoprotein XD domain"/>
    <property type="match status" value="1"/>
</dbReference>
<accession>P28054</accession>
<comment type="function">
    <text evidence="2 3">Essential cofactor of the RNA polymerase L that plays a central role in the transcription and replication by forming the polymerase complex with RNA polymerase L and recruiting L to the genomic N-RNA template for RNA synthesis. Also plays a central role in the encapsidation of nascent RNA chains by forming the encapsidation complex with the nucleocapsid protein N (N-P complex). Acts as a chaperone for newly synthesized free N protein, so-called N0, allowing encapsidation of nascent RNA chains during replication (By similarity). The nucleoprotein protein N prevents excessive phosphorylation of P, which leads to down-regulation of viral transcription/ replication. Participates, together with N, in the formation of viral factories (viroplasms), which are large inclusions in the host cytoplasm where replication takes place (By similarity). Recruits host PI4KB and remodel the host endoplasmic reticulum membrane to form viral replication factories (By similarity).</text>
</comment>
<comment type="subunit">
    <text evidence="1">Homotetramer. Interacts (via multimerization domain) with polymerase L; this interaction forms the polymerase complex. Interacts (via N-terminus) with N0; this interaction allows P to chaperon N0 before encapsidation and form the N-P complex. Interacts (via C-terminus) with N-RNA template; this interaction positions the polymerase on the template.</text>
</comment>
<comment type="domain">
    <text evidence="1 2">The N-terminus consists of a long intrinsically disordered tail (By similarity). The central part contains the coiled-coil multimerization domain (PMD). Forms a four-stranded coiled coil structure. The C-terminus constitutes the alpha-helical domain that binds to the nucleocapsid (N-RNA complex) (By similarity).</text>
</comment>
<comment type="similarity">
    <text evidence="6">Belongs to the respirovirus P protein family.</text>
</comment>
<gene>
    <name type="primary">P/C</name>
</gene>
<reference key="1">
    <citation type="journal article" date="1991" name="J. Virol.">
        <title>The P gene of human parainfluenza virus type 1 encodes P and C proteins but not a cysteine-rich V protein.</title>
        <authorList>
            <person name="Matsuoka Y."/>
            <person name="Curran J."/>
            <person name="Pelet T."/>
            <person name="Kolakofsky D."/>
            <person name="Ray R."/>
            <person name="Compans R.W."/>
        </authorList>
    </citation>
    <scope>NUCLEOTIDE SEQUENCE [MRNA]</scope>
</reference>
<organism>
    <name type="scientific">Human parainfluenza 1 virus (strain C39)</name>
    <name type="common">HPIV-1</name>
    <dbReference type="NCBI Taxonomy" id="11210"/>
    <lineage>
        <taxon>Viruses</taxon>
        <taxon>Riboviria</taxon>
        <taxon>Orthornavirae</taxon>
        <taxon>Negarnaviricota</taxon>
        <taxon>Haploviricotina</taxon>
        <taxon>Monjiviricetes</taxon>
        <taxon>Mononegavirales</taxon>
        <taxon>Paramyxoviridae</taxon>
        <taxon>Feraresvirinae</taxon>
        <taxon>Respirovirus</taxon>
        <taxon>Respirovirus laryngotracheitidis</taxon>
    </lineage>
</organism>
<sequence>MDQDAFFFERDPEAEGEAPRKQESLSGVIGLLDVVLSYKPTEIGEDRSWLHGIIDNPEENKPSCKADDNNKDRAISTPTQDHRSGEESGISRRTSESKTETHARLLDQQSIHRASRRGTSPNPLPENMGNERNTRIDEDSPNERRHQRSVLTDEDRKMAEDSNKREEDQVEGFPEEIRRSTPLSDDGESRTNNNGRSMETSSTHSTRITDVIINPSPELEDAVLQRNKRRPTIIRRNQTRSERTQNSELHKSTSENSSNLEDHNTKTSPKGLPPKNEESAATPKNNHNHRKTKYTMNNANNNTKSPPTPEHDTTANEEETSNTSVDEMAKLLVSLGVMKSQHEFELSRSASHVFAKRMLKSANYKEMTFNLCGMLISVEKSLENKVEENRTLLKQIQEEINSSRDLHKRFSEYQKEQNSLMMANLSTLHIITDRGGKTGDPSDTTRSPSVFTKGKDNKVKKTRFDPSMEALGGQEFKPDLIREDELRDDIKNPVLEENNNDLQASNASRLIPSTEKHTLHSLKLVIENSPLSRVEKKAYIKSLYKCRTNQEVKNVMELFEEDIDSLTN</sequence>
<protein>
    <recommendedName>
        <fullName>Phosphoprotein</fullName>
        <shortName>Protein P</shortName>
    </recommendedName>
</protein>
<keyword id="KW-0175">Coiled coil</keyword>
<keyword id="KW-0597">Phosphoprotein</keyword>
<keyword id="KW-0693">Viral RNA replication</keyword>
<proteinExistence type="evidence at transcript level"/>
<name>PHOSP_PI1HC</name>
<feature type="chain" id="PRO_0000142700" description="Phosphoprotein">
    <location>
        <begin position="1"/>
        <end position="568"/>
    </location>
</feature>
<feature type="region of interest" description="Disordered" evidence="5">
    <location>
        <begin position="1"/>
        <end position="24"/>
    </location>
</feature>
<feature type="region of interest" description="N0 binding" evidence="1">
    <location>
        <begin position="33"/>
        <end position="41"/>
    </location>
</feature>
<feature type="region of interest" description="Disordered" evidence="5">
    <location>
        <begin position="45"/>
        <end position="324"/>
    </location>
</feature>
<feature type="region of interest" description="Multimerization" evidence="2">
    <location>
        <begin position="344"/>
        <end position="411"/>
    </location>
</feature>
<feature type="region of interest" description="L protein binding" evidence="1">
    <location>
        <begin position="412"/>
        <end position="445"/>
    </location>
</feature>
<feature type="region of interest" description="Disordered" evidence="5">
    <location>
        <begin position="434"/>
        <end position="455"/>
    </location>
</feature>
<feature type="region of interest" description="Interaction with the nucleocapsid (N-RNA)" evidence="1">
    <location>
        <begin position="479"/>
        <end position="568"/>
    </location>
</feature>
<feature type="coiled-coil region" evidence="4">
    <location>
        <begin position="387"/>
        <end position="416"/>
    </location>
</feature>
<feature type="compositionally biased region" description="Basic and acidic residues" evidence="5">
    <location>
        <begin position="7"/>
        <end position="23"/>
    </location>
</feature>
<feature type="compositionally biased region" description="Basic and acidic residues" evidence="5">
    <location>
        <begin position="58"/>
        <end position="105"/>
    </location>
</feature>
<feature type="compositionally biased region" description="Polar residues" evidence="5">
    <location>
        <begin position="107"/>
        <end position="121"/>
    </location>
</feature>
<feature type="compositionally biased region" description="Basic and acidic residues" evidence="5">
    <location>
        <begin position="132"/>
        <end position="144"/>
    </location>
</feature>
<feature type="compositionally biased region" description="Basic and acidic residues" evidence="5">
    <location>
        <begin position="151"/>
        <end position="167"/>
    </location>
</feature>
<feature type="compositionally biased region" description="Polar residues" evidence="5">
    <location>
        <begin position="190"/>
        <end position="208"/>
    </location>
</feature>
<feature type="compositionally biased region" description="Basic and acidic residues" evidence="5">
    <location>
        <begin position="239"/>
        <end position="253"/>
    </location>
</feature>
<feature type="compositionally biased region" description="Polar residues" evidence="5">
    <location>
        <begin position="294"/>
        <end position="305"/>
    </location>
</feature>
<feature type="compositionally biased region" description="Polar residues" evidence="5">
    <location>
        <begin position="441"/>
        <end position="450"/>
    </location>
</feature>
<organismHost>
    <name type="scientific">Homo sapiens</name>
    <name type="common">Human</name>
    <dbReference type="NCBI Taxonomy" id="9606"/>
</organismHost>